<feature type="chain" id="PRO_0000388837" description="UPF0756 membrane protein BcerKBAB4_4425">
    <location>
        <begin position="1"/>
        <end position="153"/>
    </location>
</feature>
<feature type="transmembrane region" description="Helical" evidence="1">
    <location>
        <begin position="8"/>
        <end position="28"/>
    </location>
</feature>
<feature type="transmembrane region" description="Helical" evidence="1">
    <location>
        <begin position="54"/>
        <end position="74"/>
    </location>
</feature>
<feature type="transmembrane region" description="Helical" evidence="1">
    <location>
        <begin position="87"/>
        <end position="107"/>
    </location>
</feature>
<feature type="transmembrane region" description="Helical" evidence="1">
    <location>
        <begin position="117"/>
        <end position="137"/>
    </location>
</feature>
<organism>
    <name type="scientific">Bacillus mycoides (strain KBAB4)</name>
    <name type="common">Bacillus weihenstephanensis</name>
    <dbReference type="NCBI Taxonomy" id="315730"/>
    <lineage>
        <taxon>Bacteria</taxon>
        <taxon>Bacillati</taxon>
        <taxon>Bacillota</taxon>
        <taxon>Bacilli</taxon>
        <taxon>Bacillales</taxon>
        <taxon>Bacillaceae</taxon>
        <taxon>Bacillus</taxon>
        <taxon>Bacillus cereus group</taxon>
    </lineage>
</organism>
<keyword id="KW-1003">Cell membrane</keyword>
<keyword id="KW-0472">Membrane</keyword>
<keyword id="KW-0812">Transmembrane</keyword>
<keyword id="KW-1133">Transmembrane helix</keyword>
<gene>
    <name type="ordered locus">BcerKBAB4_4425</name>
</gene>
<comment type="subcellular location">
    <subcellularLocation>
        <location evidence="1">Cell membrane</location>
        <topology evidence="1">Multi-pass membrane protein</topology>
    </subcellularLocation>
</comment>
<comment type="similarity">
    <text evidence="1">Belongs to the UPF0756 family.</text>
</comment>
<evidence type="ECO:0000255" key="1">
    <source>
        <dbReference type="HAMAP-Rule" id="MF_01874"/>
    </source>
</evidence>
<sequence length="153" mass="15998">MISQSTLFLFILLIIGLIAKNQSLTVAIGVLFLLKFTFLGDKVFPYLQTKGINLGVTVITIAVLVPIATGEIGFKQLGEAAKSYYAWIALASGVAVALLAKGGVQLLTTDPHITTALVFGTIIAVALFNGVAVGPLIGAGIAYAVMSIIQMFK</sequence>
<accession>A9VJQ7</accession>
<reference key="1">
    <citation type="journal article" date="2008" name="Chem. Biol. Interact.">
        <title>Extending the Bacillus cereus group genomics to putative food-borne pathogens of different toxicity.</title>
        <authorList>
            <person name="Lapidus A."/>
            <person name="Goltsman E."/>
            <person name="Auger S."/>
            <person name="Galleron N."/>
            <person name="Segurens B."/>
            <person name="Dossat C."/>
            <person name="Land M.L."/>
            <person name="Broussolle V."/>
            <person name="Brillard J."/>
            <person name="Guinebretiere M.-H."/>
            <person name="Sanchis V."/>
            <person name="Nguen-the C."/>
            <person name="Lereclus D."/>
            <person name="Richardson P."/>
            <person name="Wincker P."/>
            <person name="Weissenbach J."/>
            <person name="Ehrlich S.D."/>
            <person name="Sorokin A."/>
        </authorList>
    </citation>
    <scope>NUCLEOTIDE SEQUENCE [LARGE SCALE GENOMIC DNA]</scope>
    <source>
        <strain>KBAB4</strain>
    </source>
</reference>
<proteinExistence type="inferred from homology"/>
<name>Y4425_BACMK</name>
<protein>
    <recommendedName>
        <fullName evidence="1">UPF0756 membrane protein BcerKBAB4_4425</fullName>
    </recommendedName>
</protein>
<dbReference type="EMBL" id="CP000903">
    <property type="protein sequence ID" value="ABY45584.1"/>
    <property type="molecule type" value="Genomic_DNA"/>
</dbReference>
<dbReference type="RefSeq" id="WP_000625507.1">
    <property type="nucleotide sequence ID" value="NC_010184.1"/>
</dbReference>
<dbReference type="KEGG" id="bwe:BcerKBAB4_4425"/>
<dbReference type="eggNOG" id="COG2707">
    <property type="taxonomic scope" value="Bacteria"/>
</dbReference>
<dbReference type="HOGENOM" id="CLU_125889_1_0_9"/>
<dbReference type="Proteomes" id="UP000002154">
    <property type="component" value="Chromosome"/>
</dbReference>
<dbReference type="GO" id="GO:0005886">
    <property type="term" value="C:plasma membrane"/>
    <property type="evidence" value="ECO:0007669"/>
    <property type="project" value="UniProtKB-SubCell"/>
</dbReference>
<dbReference type="HAMAP" id="MF_01874">
    <property type="entry name" value="UPF0756"/>
    <property type="match status" value="1"/>
</dbReference>
<dbReference type="InterPro" id="IPR007382">
    <property type="entry name" value="UPF0756_TM"/>
</dbReference>
<dbReference type="PANTHER" id="PTHR38452">
    <property type="entry name" value="UPF0756 MEMBRANE PROTEIN YEAL"/>
    <property type="match status" value="1"/>
</dbReference>
<dbReference type="PANTHER" id="PTHR38452:SF1">
    <property type="entry name" value="UPF0756 MEMBRANE PROTEIN YEAL"/>
    <property type="match status" value="1"/>
</dbReference>
<dbReference type="Pfam" id="PF04284">
    <property type="entry name" value="DUF441"/>
    <property type="match status" value="1"/>
</dbReference>